<organism>
    <name type="scientific">Sulfolobus acidocaldarius (strain ATCC 33909 / DSM 639 / JCM 8929 / NBRC 15157 / NCIMB 11770)</name>
    <dbReference type="NCBI Taxonomy" id="330779"/>
    <lineage>
        <taxon>Archaea</taxon>
        <taxon>Thermoproteota</taxon>
        <taxon>Thermoprotei</taxon>
        <taxon>Sulfolobales</taxon>
        <taxon>Sulfolobaceae</taxon>
        <taxon>Sulfolobus</taxon>
    </lineage>
</organism>
<proteinExistence type="inferred from homology"/>
<dbReference type="EMBL" id="CP000077">
    <property type="protein sequence ID" value="AAY80254.1"/>
    <property type="molecule type" value="Genomic_DNA"/>
</dbReference>
<dbReference type="RefSeq" id="WP_011277756.1">
    <property type="nucleotide sequence ID" value="NC_007181.1"/>
</dbReference>
<dbReference type="SMR" id="Q4JAC6"/>
<dbReference type="STRING" id="330779.Saci_0891"/>
<dbReference type="GeneID" id="14551402"/>
<dbReference type="KEGG" id="sai:Saci_0891"/>
<dbReference type="PATRIC" id="fig|330779.12.peg.851"/>
<dbReference type="eggNOG" id="arCOG04308">
    <property type="taxonomic scope" value="Archaea"/>
</dbReference>
<dbReference type="HOGENOM" id="CLU_165882_1_0_2"/>
<dbReference type="Proteomes" id="UP000001018">
    <property type="component" value="Chromosome"/>
</dbReference>
<dbReference type="Gene3D" id="1.20.1440.50">
    <property type="entry name" value="Ta0600-like"/>
    <property type="match status" value="1"/>
</dbReference>
<dbReference type="HAMAP" id="MF_00342">
    <property type="entry name" value="UPF0147"/>
    <property type="match status" value="1"/>
</dbReference>
<dbReference type="InterPro" id="IPR023130">
    <property type="entry name" value="Ta0600-like_sf"/>
</dbReference>
<dbReference type="InterPro" id="IPR005354">
    <property type="entry name" value="UPF0147"/>
</dbReference>
<dbReference type="NCBIfam" id="NF003319">
    <property type="entry name" value="PRK04330.1"/>
    <property type="match status" value="1"/>
</dbReference>
<dbReference type="Pfam" id="PF03685">
    <property type="entry name" value="UPF0147"/>
    <property type="match status" value="1"/>
</dbReference>
<dbReference type="SUPFAM" id="SSF158436">
    <property type="entry name" value="Ta0600-like"/>
    <property type="match status" value="1"/>
</dbReference>
<reference key="1">
    <citation type="journal article" date="2005" name="J. Bacteriol.">
        <title>The genome of Sulfolobus acidocaldarius, a model organism of the Crenarchaeota.</title>
        <authorList>
            <person name="Chen L."/>
            <person name="Bruegger K."/>
            <person name="Skovgaard M."/>
            <person name="Redder P."/>
            <person name="She Q."/>
            <person name="Torarinsson E."/>
            <person name="Greve B."/>
            <person name="Awayez M."/>
            <person name="Zibat A."/>
            <person name="Klenk H.-P."/>
            <person name="Garrett R.A."/>
        </authorList>
    </citation>
    <scope>NUCLEOTIDE SEQUENCE [LARGE SCALE GENOMIC DNA]</scope>
    <source>
        <strain>ATCC 33909 / DSM 639 / JCM 8929 / NBRC 15157 / NCIMB 11770</strain>
    </source>
</reference>
<name>Y891_SULAC</name>
<evidence type="ECO:0000255" key="1">
    <source>
        <dbReference type="HAMAP-Rule" id="MF_00342"/>
    </source>
</evidence>
<keyword id="KW-1185">Reference proteome</keyword>
<protein>
    <recommendedName>
        <fullName evidence="1">UPF0147 protein Saci_0891</fullName>
    </recommendedName>
</protein>
<comment type="similarity">
    <text evidence="1">Belongs to the UPF0147 family.</text>
</comment>
<gene>
    <name type="ordered locus">Saci_0891</name>
</gene>
<accession>Q4JAC6</accession>
<sequence>MSALYDNEAKIRQAVGMLQKIVNDTSVPRNIRRAATDAIRNLQDQTLSPAVRAANAIGILEEISQDPNMPMHTRIAIWNVVSMLETVKD</sequence>
<feature type="chain" id="PRO_0000150916" description="UPF0147 protein Saci_0891">
    <location>
        <begin position="1"/>
        <end position="89"/>
    </location>
</feature>